<name>NQO1_HUMAN</name>
<sequence length="274" mass="30868">MVGRRALIVLAHSERTSFNYAMKEAAAAALKKKGWEVVESDLYAMNFNPIISRKDITGKLKDPANFQYPAESVLAYKEGHLSPDIVAEQKKLEAADLVIFQFPLQWFGVPAILKGWFERVFIGEFAYTYAAMYDKGPFRSKKAVLSITTGGSGSMYSLQGIHGDMNVILWPIQSGILHFCGFQVLEPQLTYSIGHTPADARIQILEGWKKRLENIWDETPLYFAPSSLFDLNFQAGFLMKKEVQDEEKNKKFGLSVGHHLGKSIPTDNQIKARK</sequence>
<keyword id="KW-0002">3D-structure</keyword>
<keyword id="KW-0025">Alternative splicing</keyword>
<keyword id="KW-0963">Cytoplasm</keyword>
<keyword id="KW-0274">FAD</keyword>
<keyword id="KW-0285">Flavoprotein</keyword>
<keyword id="KW-1017">Isopeptide bond</keyword>
<keyword id="KW-0520">NAD</keyword>
<keyword id="KW-0521">NADP</keyword>
<keyword id="KW-0560">Oxidoreductase</keyword>
<keyword id="KW-0597">Phosphoprotein</keyword>
<keyword id="KW-1267">Proteomics identification</keyword>
<keyword id="KW-1185">Reference proteome</keyword>
<keyword id="KW-0832">Ubl conjugation</keyword>
<feature type="chain" id="PRO_0000071622" description="NAD(P)H dehydrogenase [quinone] 1">
    <location>
        <begin position="1"/>
        <end position="274"/>
    </location>
</feature>
<feature type="region of interest" description="Important for apoenzyme conformational stability" evidence="14">
    <location>
        <begin position="225"/>
        <end position="274"/>
    </location>
</feature>
<feature type="binding site" evidence="3 4 6">
    <location>
        <position position="12"/>
    </location>
    <ligand>
        <name>FAD</name>
        <dbReference type="ChEBI" id="CHEBI:57692"/>
    </ligand>
</feature>
<feature type="binding site" evidence="3 4 6">
    <location>
        <begin position="18"/>
        <end position="19"/>
    </location>
    <ligand>
        <name>FAD</name>
        <dbReference type="ChEBI" id="CHEBI:57692"/>
    </ligand>
</feature>
<feature type="binding site" evidence="3 4 6">
    <location>
        <position position="67"/>
    </location>
    <ligand>
        <name>FAD</name>
        <dbReference type="ChEBI" id="CHEBI:57692"/>
    </ligand>
</feature>
<feature type="binding site" evidence="3 4 6">
    <location>
        <begin position="104"/>
        <end position="107"/>
    </location>
    <ligand>
        <name>FAD</name>
        <dbReference type="ChEBI" id="CHEBI:57692"/>
    </ligand>
</feature>
<feature type="binding site">
    <location>
        <begin position="126"/>
        <end position="128"/>
    </location>
    <ligand>
        <name>substrate</name>
    </ligand>
</feature>
<feature type="binding site" evidence="3 4 6">
    <location>
        <begin position="148"/>
        <end position="151"/>
    </location>
    <ligand>
        <name>FAD</name>
        <dbReference type="ChEBI" id="CHEBI:57692"/>
    </ligand>
</feature>
<feature type="binding site" evidence="3 4 6">
    <location>
        <position position="156"/>
    </location>
    <ligand>
        <name>FAD</name>
        <dbReference type="ChEBI" id="CHEBI:57692"/>
    </ligand>
</feature>
<feature type="binding site" evidence="3 4 6">
    <location>
        <position position="201"/>
    </location>
    <ligand>
        <name>FAD</name>
        <dbReference type="ChEBI" id="CHEBI:57692"/>
    </ligand>
</feature>
<feature type="modified residue" description="Phosphoserine" evidence="25">
    <location>
        <position position="82"/>
    </location>
</feature>
<feature type="cross-link" description="Glycyl lysine isopeptide (Lys-Gly) (interchain with G-Cter in SUMO2)" evidence="26">
    <location>
        <position position="250"/>
    </location>
</feature>
<feature type="cross-link" description="Glycyl lysine isopeptide (Lys-Gly) (interchain with G-Cter in SUMO2)" evidence="26">
    <location>
        <position position="251"/>
    </location>
</feature>
<feature type="splice variant" id="VSP_044446" description="In isoform 3." evidence="18">
    <location>
        <begin position="102"/>
        <end position="139"/>
    </location>
</feature>
<feature type="splice variant" id="VSP_042716" description="In isoform 2." evidence="18">
    <location>
        <begin position="140"/>
        <end position="173"/>
    </location>
</feature>
<feature type="sequence variant" id="VAR_016170" description="In dbSNP:rs1131341.">
    <original>R</original>
    <variation>W</variation>
    <location>
        <position position="139"/>
    </location>
</feature>
<feature type="sequence variant" id="VAR_008384" description="Loss of function associated with defective cofactor binding and accelerated proteasomal degradation; dbSNP:rs1800566." evidence="2 7 12 14 17">
    <original>P</original>
    <variation>S</variation>
    <location>
        <position position="187"/>
    </location>
</feature>
<feature type="sequence variant" id="VAR_050220" description="In dbSNP:rs34447156.">
    <original>Q</original>
    <variation>H</variation>
    <location>
        <position position="269"/>
    </location>
</feature>
<feature type="mutagenesis site" description="Decreases the catalytic efficiency toward menadione. Increases the affinity toward NADH. Increases the catalytic afficiency toward nitrobenzene substrate. Has no effect on the affinity toward NADH; when associated with V-204." evidence="15">
    <original>Q</original>
    <variation>Y</variation>
    <location>
        <position position="105"/>
    </location>
</feature>
<feature type="mutagenesis site" description="Abolishes the interaction with TP73." evidence="9">
    <original>Y</original>
    <variation>F</variation>
    <variation>V</variation>
    <location>
        <position position="129"/>
    </location>
</feature>
<feature type="mutagenesis site" description="Has no effect on the affinity toward NADH; when associated with Y-105." evidence="15">
    <original>I</original>
    <variation>V</variation>
    <location>
        <position position="204"/>
    </location>
</feature>
<feature type="sequence conflict" description="In Ref. 4; BAG60289." evidence="21" ref="4">
    <original>F</original>
    <variation>S</variation>
    <location>
        <position position="252"/>
    </location>
</feature>
<feature type="strand" evidence="31">
    <location>
        <begin position="5"/>
        <end position="10"/>
    </location>
</feature>
<feature type="strand" evidence="28">
    <location>
        <begin position="15"/>
        <end position="17"/>
    </location>
</feature>
<feature type="helix" evidence="31">
    <location>
        <begin position="18"/>
        <end position="32"/>
    </location>
</feature>
<feature type="strand" evidence="31">
    <location>
        <begin position="36"/>
        <end position="41"/>
    </location>
</feature>
<feature type="turn" evidence="31">
    <location>
        <begin position="42"/>
        <end position="46"/>
    </location>
</feature>
<feature type="helix" evidence="31">
    <location>
        <begin position="53"/>
        <end position="55"/>
    </location>
</feature>
<feature type="strand" evidence="30">
    <location>
        <begin position="56"/>
        <end position="58"/>
    </location>
</feature>
<feature type="helix" evidence="30">
    <location>
        <begin position="63"/>
        <end position="65"/>
    </location>
</feature>
<feature type="helix" evidence="31">
    <location>
        <begin position="68"/>
        <end position="78"/>
    </location>
</feature>
<feature type="helix" evidence="31">
    <location>
        <begin position="83"/>
        <end position="94"/>
    </location>
</feature>
<feature type="strand" evidence="31">
    <location>
        <begin position="96"/>
        <end position="103"/>
    </location>
</feature>
<feature type="strand" evidence="29">
    <location>
        <begin position="106"/>
        <end position="108"/>
    </location>
</feature>
<feature type="helix" evidence="31">
    <location>
        <begin position="111"/>
        <end position="120"/>
    </location>
</feature>
<feature type="turn" evidence="31">
    <location>
        <begin position="124"/>
        <end position="126"/>
    </location>
</feature>
<feature type="helix" evidence="31">
    <location>
        <begin position="129"/>
        <end position="131"/>
    </location>
</feature>
<feature type="helix" evidence="31">
    <location>
        <begin position="133"/>
        <end position="135"/>
    </location>
</feature>
<feature type="turn" evidence="31">
    <location>
        <begin position="137"/>
        <end position="140"/>
    </location>
</feature>
<feature type="strand" evidence="31">
    <location>
        <begin position="142"/>
        <end position="148"/>
    </location>
</feature>
<feature type="helix" evidence="31">
    <location>
        <begin position="153"/>
        <end position="156"/>
    </location>
</feature>
<feature type="strand" evidence="27">
    <location>
        <begin position="160"/>
        <end position="162"/>
    </location>
</feature>
<feature type="helix" evidence="31">
    <location>
        <begin position="165"/>
        <end position="173"/>
    </location>
</feature>
<feature type="turn" evidence="31">
    <location>
        <begin position="174"/>
        <end position="177"/>
    </location>
</feature>
<feature type="helix" evidence="31">
    <location>
        <begin position="178"/>
        <end position="180"/>
    </location>
</feature>
<feature type="strand" evidence="31">
    <location>
        <begin position="188"/>
        <end position="190"/>
    </location>
</feature>
<feature type="helix" evidence="31">
    <location>
        <begin position="193"/>
        <end position="195"/>
    </location>
</feature>
<feature type="helix" evidence="31">
    <location>
        <begin position="198"/>
        <end position="212"/>
    </location>
</feature>
<feature type="helix" evidence="31">
    <location>
        <begin position="213"/>
        <end position="217"/>
    </location>
</feature>
<feature type="helix" evidence="31">
    <location>
        <begin position="226"/>
        <end position="228"/>
    </location>
</feature>
<feature type="turn" evidence="31">
    <location>
        <begin position="233"/>
        <end position="237"/>
    </location>
</feature>
<feature type="helix" evidence="31">
    <location>
        <begin position="241"/>
        <end position="247"/>
    </location>
</feature>
<feature type="strand" evidence="31">
    <location>
        <begin position="254"/>
        <end position="256"/>
    </location>
</feature>
<feature type="turn" evidence="31">
    <location>
        <begin position="266"/>
        <end position="270"/>
    </location>
</feature>
<protein>
    <recommendedName>
        <fullName>NAD(P)H dehydrogenase [quinone] 1</fullName>
        <ecNumber evidence="15 16">1.6.5.2</ecNumber>
    </recommendedName>
    <alternativeName>
        <fullName>Azoreductase</fullName>
    </alternativeName>
    <alternativeName>
        <fullName evidence="20">DT-diaphorase</fullName>
        <shortName>DTD</shortName>
    </alternativeName>
    <alternativeName>
        <fullName>Menadione reductase</fullName>
    </alternativeName>
    <alternativeName>
        <fullName evidence="19">NAD(P)H:quinone oxidoreductase 1</fullName>
    </alternativeName>
    <alternativeName>
        <fullName>Phylloquinone reductase</fullName>
    </alternativeName>
    <alternativeName>
        <fullName>Quinone reductase 1</fullName>
        <shortName>QR1</shortName>
    </alternativeName>
</protein>
<organism>
    <name type="scientific">Homo sapiens</name>
    <name type="common">Human</name>
    <dbReference type="NCBI Taxonomy" id="9606"/>
    <lineage>
        <taxon>Eukaryota</taxon>
        <taxon>Metazoa</taxon>
        <taxon>Chordata</taxon>
        <taxon>Craniata</taxon>
        <taxon>Vertebrata</taxon>
        <taxon>Euteleostomi</taxon>
        <taxon>Mammalia</taxon>
        <taxon>Eutheria</taxon>
        <taxon>Euarchontoglires</taxon>
        <taxon>Primates</taxon>
        <taxon>Haplorrhini</taxon>
        <taxon>Catarrhini</taxon>
        <taxon>Hominidae</taxon>
        <taxon>Homo</taxon>
    </lineage>
</organism>
<accession>P15559</accession>
<accession>B2R5Y9</accession>
<accession>B4DNM7</accession>
<accession>B7ZAD1</accession>
<accession>Q86UK1</accession>
<evidence type="ECO:0000250" key="1">
    <source>
        <dbReference type="UniProtKB" id="P05982"/>
    </source>
</evidence>
<evidence type="ECO:0000269" key="2">
    <source>
    </source>
</evidence>
<evidence type="ECO:0000269" key="3">
    <source>
    </source>
</evidence>
<evidence type="ECO:0000269" key="4">
    <source>
    </source>
</evidence>
<evidence type="ECO:0000269" key="5">
    <source>
    </source>
</evidence>
<evidence type="ECO:0000269" key="6">
    <source>
    </source>
</evidence>
<evidence type="ECO:0000269" key="7">
    <source>
    </source>
</evidence>
<evidence type="ECO:0000269" key="8">
    <source>
    </source>
</evidence>
<evidence type="ECO:0000269" key="9">
    <source>
    </source>
</evidence>
<evidence type="ECO:0000269" key="10">
    <source>
    </source>
</evidence>
<evidence type="ECO:0000269" key="11">
    <source>
    </source>
</evidence>
<evidence type="ECO:0000269" key="12">
    <source>
    </source>
</evidence>
<evidence type="ECO:0000269" key="13">
    <source>
    </source>
</evidence>
<evidence type="ECO:0000269" key="14">
    <source>
    </source>
</evidence>
<evidence type="ECO:0000269" key="15">
    <source>
    </source>
</evidence>
<evidence type="ECO:0000269" key="16">
    <source>
    </source>
</evidence>
<evidence type="ECO:0000269" key="17">
    <source ref="3"/>
</evidence>
<evidence type="ECO:0000303" key="18">
    <source>
    </source>
</evidence>
<evidence type="ECO:0000303" key="19">
    <source>
    </source>
</evidence>
<evidence type="ECO:0000303" key="20">
    <source>
    </source>
</evidence>
<evidence type="ECO:0000305" key="21"/>
<evidence type="ECO:0000305" key="22">
    <source>
    </source>
</evidence>
<evidence type="ECO:0000305" key="23">
    <source>
    </source>
</evidence>
<evidence type="ECO:0000312" key="24">
    <source>
        <dbReference type="HGNC" id="HGNC:2874"/>
    </source>
</evidence>
<evidence type="ECO:0007744" key="25">
    <source>
    </source>
</evidence>
<evidence type="ECO:0007744" key="26">
    <source>
    </source>
</evidence>
<evidence type="ECO:0007829" key="27">
    <source>
        <dbReference type="PDB" id="1H69"/>
    </source>
</evidence>
<evidence type="ECO:0007829" key="28">
    <source>
        <dbReference type="PDB" id="1QBG"/>
    </source>
</evidence>
<evidence type="ECO:0007829" key="29">
    <source>
        <dbReference type="PDB" id="4CET"/>
    </source>
</evidence>
<evidence type="ECO:0007829" key="30">
    <source>
        <dbReference type="PDB" id="5EA2"/>
    </source>
</evidence>
<evidence type="ECO:0007829" key="31">
    <source>
        <dbReference type="PDB" id="8OK0"/>
    </source>
</evidence>
<reference key="1">
    <citation type="journal article" date="1988" name="J. Biol. Chem.">
        <title>Human dioxin-inducible cytosolic NAD(P)H:menadione oxidoreductase. cDNA sequence and localization of gene to chromosome 16.</title>
        <authorList>
            <person name="Jaiswal A.K."/>
            <person name="McBride O.W."/>
            <person name="Adesnik M."/>
            <person name="Nebert D.W."/>
        </authorList>
    </citation>
    <scope>NUCLEOTIDE SEQUENCE [MRNA] (ISOFORM 1)</scope>
    <source>
        <tissue>Liver</tissue>
    </source>
</reference>
<reference key="2">
    <citation type="journal article" date="1991" name="Biochemistry">
        <title>Human NAD(P)H:quinone oxidoreductase (NQO1) gene structure and induction by dioxin.</title>
        <authorList>
            <person name="Jaiswal A.K."/>
        </authorList>
    </citation>
    <scope>NUCLEOTIDE SEQUENCE [GENOMIC DNA]</scope>
    <scope>INDUCTION</scope>
</reference>
<reference key="3">
    <citation type="submission" date="2003-04" db="EMBL/GenBank/DDBJ databases">
        <authorList>
            <consortium name="NIEHS SNPs program"/>
        </authorList>
    </citation>
    <scope>NUCLEOTIDE SEQUENCE [GENOMIC DNA]</scope>
    <scope>VARIANT SER-187</scope>
</reference>
<reference key="4">
    <citation type="journal article" date="2004" name="Nat. Genet.">
        <title>Complete sequencing and characterization of 21,243 full-length human cDNAs.</title>
        <authorList>
            <person name="Ota T."/>
            <person name="Suzuki Y."/>
            <person name="Nishikawa T."/>
            <person name="Otsuki T."/>
            <person name="Sugiyama T."/>
            <person name="Irie R."/>
            <person name="Wakamatsu A."/>
            <person name="Hayashi K."/>
            <person name="Sato H."/>
            <person name="Nagai K."/>
            <person name="Kimura K."/>
            <person name="Makita H."/>
            <person name="Sekine M."/>
            <person name="Obayashi M."/>
            <person name="Nishi T."/>
            <person name="Shibahara T."/>
            <person name="Tanaka T."/>
            <person name="Ishii S."/>
            <person name="Yamamoto J."/>
            <person name="Saito K."/>
            <person name="Kawai Y."/>
            <person name="Isono Y."/>
            <person name="Nakamura Y."/>
            <person name="Nagahari K."/>
            <person name="Murakami K."/>
            <person name="Yasuda T."/>
            <person name="Iwayanagi T."/>
            <person name="Wagatsuma M."/>
            <person name="Shiratori A."/>
            <person name="Sudo H."/>
            <person name="Hosoiri T."/>
            <person name="Kaku Y."/>
            <person name="Kodaira H."/>
            <person name="Kondo H."/>
            <person name="Sugawara M."/>
            <person name="Takahashi M."/>
            <person name="Kanda K."/>
            <person name="Yokoi T."/>
            <person name="Furuya T."/>
            <person name="Kikkawa E."/>
            <person name="Omura Y."/>
            <person name="Abe K."/>
            <person name="Kamihara K."/>
            <person name="Katsuta N."/>
            <person name="Sato K."/>
            <person name="Tanikawa M."/>
            <person name="Yamazaki M."/>
            <person name="Ninomiya K."/>
            <person name="Ishibashi T."/>
            <person name="Yamashita H."/>
            <person name="Murakawa K."/>
            <person name="Fujimori K."/>
            <person name="Tanai H."/>
            <person name="Kimata M."/>
            <person name="Watanabe M."/>
            <person name="Hiraoka S."/>
            <person name="Chiba Y."/>
            <person name="Ishida S."/>
            <person name="Ono Y."/>
            <person name="Takiguchi S."/>
            <person name="Watanabe S."/>
            <person name="Yosida M."/>
            <person name="Hotuta T."/>
            <person name="Kusano J."/>
            <person name="Kanehori K."/>
            <person name="Takahashi-Fujii A."/>
            <person name="Hara H."/>
            <person name="Tanase T.-O."/>
            <person name="Nomura Y."/>
            <person name="Togiya S."/>
            <person name="Komai F."/>
            <person name="Hara R."/>
            <person name="Takeuchi K."/>
            <person name="Arita M."/>
            <person name="Imose N."/>
            <person name="Musashino K."/>
            <person name="Yuuki H."/>
            <person name="Oshima A."/>
            <person name="Sasaki N."/>
            <person name="Aotsuka S."/>
            <person name="Yoshikawa Y."/>
            <person name="Matsunawa H."/>
            <person name="Ichihara T."/>
            <person name="Shiohata N."/>
            <person name="Sano S."/>
            <person name="Moriya S."/>
            <person name="Momiyama H."/>
            <person name="Satoh N."/>
            <person name="Takami S."/>
            <person name="Terashima Y."/>
            <person name="Suzuki O."/>
            <person name="Nakagawa S."/>
            <person name="Senoh A."/>
            <person name="Mizoguchi H."/>
            <person name="Goto Y."/>
            <person name="Shimizu F."/>
            <person name="Wakebe H."/>
            <person name="Hishigaki H."/>
            <person name="Watanabe T."/>
            <person name="Sugiyama A."/>
            <person name="Takemoto M."/>
            <person name="Kawakami B."/>
            <person name="Yamazaki M."/>
            <person name="Watanabe K."/>
            <person name="Kumagai A."/>
            <person name="Itakura S."/>
            <person name="Fukuzumi Y."/>
            <person name="Fujimori Y."/>
            <person name="Komiyama M."/>
            <person name="Tashiro H."/>
            <person name="Tanigami A."/>
            <person name="Fujiwara T."/>
            <person name="Ono T."/>
            <person name="Yamada K."/>
            <person name="Fujii Y."/>
            <person name="Ozaki K."/>
            <person name="Hirao M."/>
            <person name="Ohmori Y."/>
            <person name="Kawabata A."/>
            <person name="Hikiji T."/>
            <person name="Kobatake N."/>
            <person name="Inagaki H."/>
            <person name="Ikema Y."/>
            <person name="Okamoto S."/>
            <person name="Okitani R."/>
            <person name="Kawakami T."/>
            <person name="Noguchi S."/>
            <person name="Itoh T."/>
            <person name="Shigeta K."/>
            <person name="Senba T."/>
            <person name="Matsumura K."/>
            <person name="Nakajima Y."/>
            <person name="Mizuno T."/>
            <person name="Morinaga M."/>
            <person name="Sasaki M."/>
            <person name="Togashi T."/>
            <person name="Oyama M."/>
            <person name="Hata H."/>
            <person name="Watanabe M."/>
            <person name="Komatsu T."/>
            <person name="Mizushima-Sugano J."/>
            <person name="Satoh T."/>
            <person name="Shirai Y."/>
            <person name="Takahashi Y."/>
            <person name="Nakagawa K."/>
            <person name="Okumura K."/>
            <person name="Nagase T."/>
            <person name="Nomura N."/>
            <person name="Kikuchi H."/>
            <person name="Masuho Y."/>
            <person name="Yamashita R."/>
            <person name="Nakai K."/>
            <person name="Yada T."/>
            <person name="Nakamura Y."/>
            <person name="Ohara O."/>
            <person name="Isogai T."/>
            <person name="Sugano S."/>
        </authorList>
    </citation>
    <scope>NUCLEOTIDE SEQUENCE [LARGE SCALE MRNA] (ISOFORMS 1; 2 AND 3)</scope>
    <scope>VARIANT SER-187</scope>
    <source>
        <tissue>Amygdala</tissue>
    </source>
</reference>
<reference key="5">
    <citation type="journal article" date="2004" name="Nature">
        <title>The sequence and analysis of duplication-rich human chromosome 16.</title>
        <authorList>
            <person name="Martin J."/>
            <person name="Han C."/>
            <person name="Gordon L.A."/>
            <person name="Terry A."/>
            <person name="Prabhakar S."/>
            <person name="She X."/>
            <person name="Xie G."/>
            <person name="Hellsten U."/>
            <person name="Chan Y.M."/>
            <person name="Altherr M."/>
            <person name="Couronne O."/>
            <person name="Aerts A."/>
            <person name="Bajorek E."/>
            <person name="Black S."/>
            <person name="Blumer H."/>
            <person name="Branscomb E."/>
            <person name="Brown N.C."/>
            <person name="Bruno W.J."/>
            <person name="Buckingham J.M."/>
            <person name="Callen D.F."/>
            <person name="Campbell C.S."/>
            <person name="Campbell M.L."/>
            <person name="Campbell E.W."/>
            <person name="Caoile C."/>
            <person name="Challacombe J.F."/>
            <person name="Chasteen L.A."/>
            <person name="Chertkov O."/>
            <person name="Chi H.C."/>
            <person name="Christensen M."/>
            <person name="Clark L.M."/>
            <person name="Cohn J.D."/>
            <person name="Denys M."/>
            <person name="Detter J.C."/>
            <person name="Dickson M."/>
            <person name="Dimitrijevic-Bussod M."/>
            <person name="Escobar J."/>
            <person name="Fawcett J.J."/>
            <person name="Flowers D."/>
            <person name="Fotopulos D."/>
            <person name="Glavina T."/>
            <person name="Gomez M."/>
            <person name="Gonzales E."/>
            <person name="Goodstein D."/>
            <person name="Goodwin L.A."/>
            <person name="Grady D.L."/>
            <person name="Grigoriev I."/>
            <person name="Groza M."/>
            <person name="Hammon N."/>
            <person name="Hawkins T."/>
            <person name="Haydu L."/>
            <person name="Hildebrand C.E."/>
            <person name="Huang W."/>
            <person name="Israni S."/>
            <person name="Jett J."/>
            <person name="Jewett P.B."/>
            <person name="Kadner K."/>
            <person name="Kimball H."/>
            <person name="Kobayashi A."/>
            <person name="Krawczyk M.-C."/>
            <person name="Leyba T."/>
            <person name="Longmire J.L."/>
            <person name="Lopez F."/>
            <person name="Lou Y."/>
            <person name="Lowry S."/>
            <person name="Ludeman T."/>
            <person name="Manohar C.F."/>
            <person name="Mark G.A."/>
            <person name="McMurray K.L."/>
            <person name="Meincke L.J."/>
            <person name="Morgan J."/>
            <person name="Moyzis R.K."/>
            <person name="Mundt M.O."/>
            <person name="Munk A.C."/>
            <person name="Nandkeshwar R.D."/>
            <person name="Pitluck S."/>
            <person name="Pollard M."/>
            <person name="Predki P."/>
            <person name="Parson-Quintana B."/>
            <person name="Ramirez L."/>
            <person name="Rash S."/>
            <person name="Retterer J."/>
            <person name="Ricke D.O."/>
            <person name="Robinson D.L."/>
            <person name="Rodriguez A."/>
            <person name="Salamov A."/>
            <person name="Saunders E.H."/>
            <person name="Scott D."/>
            <person name="Shough T."/>
            <person name="Stallings R.L."/>
            <person name="Stalvey M."/>
            <person name="Sutherland R.D."/>
            <person name="Tapia R."/>
            <person name="Tesmer J.G."/>
            <person name="Thayer N."/>
            <person name="Thompson L.S."/>
            <person name="Tice H."/>
            <person name="Torney D.C."/>
            <person name="Tran-Gyamfi M."/>
            <person name="Tsai M."/>
            <person name="Ulanovsky L.E."/>
            <person name="Ustaszewska A."/>
            <person name="Vo N."/>
            <person name="White P.S."/>
            <person name="Williams A.L."/>
            <person name="Wills P.L."/>
            <person name="Wu J.-R."/>
            <person name="Wu K."/>
            <person name="Yang J."/>
            <person name="DeJong P."/>
            <person name="Bruce D."/>
            <person name="Doggett N.A."/>
            <person name="Deaven L."/>
            <person name="Schmutz J."/>
            <person name="Grimwood J."/>
            <person name="Richardson P."/>
            <person name="Rokhsar D.S."/>
            <person name="Eichler E.E."/>
            <person name="Gilna P."/>
            <person name="Lucas S.M."/>
            <person name="Myers R.M."/>
            <person name="Rubin E.M."/>
            <person name="Pennacchio L.A."/>
        </authorList>
    </citation>
    <scope>NUCLEOTIDE SEQUENCE [LARGE SCALE GENOMIC DNA]</scope>
</reference>
<reference key="6">
    <citation type="submission" date="2005-07" db="EMBL/GenBank/DDBJ databases">
        <authorList>
            <person name="Mural R.J."/>
            <person name="Istrail S."/>
            <person name="Sutton G.G."/>
            <person name="Florea L."/>
            <person name="Halpern A.L."/>
            <person name="Mobarry C.M."/>
            <person name="Lippert R."/>
            <person name="Walenz B."/>
            <person name="Shatkay H."/>
            <person name="Dew I."/>
            <person name="Miller J.R."/>
            <person name="Flanigan M.J."/>
            <person name="Edwards N.J."/>
            <person name="Bolanos R."/>
            <person name="Fasulo D."/>
            <person name="Halldorsson B.V."/>
            <person name="Hannenhalli S."/>
            <person name="Turner R."/>
            <person name="Yooseph S."/>
            <person name="Lu F."/>
            <person name="Nusskern D.R."/>
            <person name="Shue B.C."/>
            <person name="Zheng X.H."/>
            <person name="Zhong F."/>
            <person name="Delcher A.L."/>
            <person name="Huson D.H."/>
            <person name="Kravitz S.A."/>
            <person name="Mouchard L."/>
            <person name="Reinert K."/>
            <person name="Remington K.A."/>
            <person name="Clark A.G."/>
            <person name="Waterman M.S."/>
            <person name="Eichler E.E."/>
            <person name="Adams M.D."/>
            <person name="Hunkapiller M.W."/>
            <person name="Myers E.W."/>
            <person name="Venter J.C."/>
        </authorList>
    </citation>
    <scope>NUCLEOTIDE SEQUENCE [LARGE SCALE GENOMIC DNA]</scope>
</reference>
<reference key="7">
    <citation type="journal article" date="2004" name="Genome Res.">
        <title>The status, quality, and expansion of the NIH full-length cDNA project: the Mammalian Gene Collection (MGC).</title>
        <authorList>
            <consortium name="The MGC Project Team"/>
        </authorList>
    </citation>
    <scope>NUCLEOTIDE SEQUENCE [LARGE SCALE MRNA] (ISOFORM 1)</scope>
    <source>
        <tissue>Colon</tissue>
    </source>
</reference>
<reference key="8">
    <citation type="journal article" date="1997" name="J. Biol. Chem.">
        <title>Molecular basis of the catalytic differences among DT-diaphorase of human, rat, and mouse.</title>
        <authorList>
            <person name="Chen S."/>
            <person name="Knox R."/>
            <person name="Wu K."/>
            <person name="Deng P.S."/>
            <person name="Zhou D."/>
            <person name="Bianchet M.A."/>
            <person name="Amzel L.M."/>
        </authorList>
    </citation>
    <scope>FUNCTION</scope>
    <scope>CATALYTIC ACTIVITY</scope>
    <scope>BIOPHYSICOCHEMICAL PROPERTIES</scope>
    <scope>MUTAGENESIS OF GLN-105 AND ILE-204</scope>
</reference>
<reference key="9">
    <citation type="journal article" date="1997" name="Mol. Pharmacol.">
        <title>The reduction of alpha-tocopherolquinone by human NAD(P)H: quinone oxidoreductase: the role of alpha-tocopherolhydroquinone as a cellular antioxidant.</title>
        <authorList>
            <person name="Siegel D."/>
            <person name="Bolton E.M."/>
            <person name="Burr J.A."/>
            <person name="Liebler D.C."/>
            <person name="Ross D."/>
        </authorList>
    </citation>
    <scope>FUNCTION</scope>
    <scope>CATALYTIC ACTIVITY</scope>
    <scope>ACTIVITY REGULATION</scope>
</reference>
<reference key="10">
    <citation type="journal article" date="2004" name="Mol. Pharmacol.">
        <title>NAD(P)H:quinone oxidoreductase 1: role as a superoxide scavenger.</title>
        <authorList>
            <person name="Siegel D."/>
            <person name="Gustafson D.L."/>
            <person name="Dehn D.L."/>
            <person name="Han J.Y."/>
            <person name="Boonchoong P."/>
            <person name="Berliner L.J."/>
            <person name="Ross D."/>
        </authorList>
    </citation>
    <scope>FUNCTION</scope>
</reference>
<reference key="11">
    <citation type="journal article" date="2005" name="Genes Dev.">
        <title>A mechanism of ubiquitin-independent proteasomal degradation of the tumor suppressors p53 and p73.</title>
        <authorList>
            <person name="Asher G."/>
            <person name="Tsvetkov P."/>
            <person name="Kahana C."/>
            <person name="Shaul Y."/>
        </authorList>
    </citation>
    <scope>FUNCTION</scope>
    <scope>ACTIVITY REGULATION</scope>
    <scope>MUTAGENESIS OF TYR-129</scope>
    <scope>INTERACTION WITH TP53 AND TP73</scope>
</reference>
<reference key="12">
    <citation type="journal article" date="2011" name="BMC Syst. Biol.">
        <title>Initial characterization of the human central proteome.</title>
        <authorList>
            <person name="Burkard T.R."/>
            <person name="Planyavsky M."/>
            <person name="Kaupe I."/>
            <person name="Breitwieser F.P."/>
            <person name="Buerckstuemmer T."/>
            <person name="Bennett K.L."/>
            <person name="Superti-Furga G."/>
            <person name="Colinge J."/>
        </authorList>
    </citation>
    <scope>IDENTIFICATION BY MASS SPECTROMETRY [LARGE SCALE ANALYSIS]</scope>
</reference>
<reference key="13">
    <citation type="journal article" date="2011" name="J. Biol. Chem.">
        <title>Actin cytoskeleton remodeling by the alternatively spliced isoform of PDLIM4/RIL protein.</title>
        <authorList>
            <person name="Guryanova O.A."/>
            <person name="Drazba J.A."/>
            <person name="Frolova E.I."/>
            <person name="Chumakov P.M."/>
        </authorList>
    </citation>
    <scope>INTERACTION WITH PDLIM4</scope>
    <scope>INDUCTION</scope>
</reference>
<reference key="14">
    <citation type="journal article" date="2013" name="J. Proteome Res.">
        <title>Toward a comprehensive characterization of a human cancer cell phosphoproteome.</title>
        <authorList>
            <person name="Zhou H."/>
            <person name="Di Palma S."/>
            <person name="Preisinger C."/>
            <person name="Peng M."/>
            <person name="Polat A.N."/>
            <person name="Heck A.J."/>
            <person name="Mohammed S."/>
        </authorList>
    </citation>
    <scope>PHOSPHORYLATION [LARGE SCALE ANALYSIS] AT SER-82</scope>
    <scope>IDENTIFICATION BY MASS SPECTROMETRY [LARGE SCALE ANALYSIS]</scope>
    <source>
        <tissue>Cervix carcinoma</tissue>
    </source>
</reference>
<reference key="15">
    <citation type="journal article" date="2017" name="Nat. Struct. Mol. Biol.">
        <title>Site-specific mapping of the human SUMO proteome reveals co-modification with phosphorylation.</title>
        <authorList>
            <person name="Hendriks I.A."/>
            <person name="Lyon D."/>
            <person name="Young C."/>
            <person name="Jensen L.J."/>
            <person name="Vertegaal A.C."/>
            <person name="Nielsen M.L."/>
        </authorList>
    </citation>
    <scope>SUMOYLATION [LARGE SCALE ANALYSIS] AT LYS-250 AND LYS-251</scope>
    <scope>IDENTIFICATION BY MASS SPECTROMETRY [LARGE SCALE ANALYSIS]</scope>
</reference>
<reference key="16">
    <citation type="journal article" date="2017" name="Sci. Rep.">
        <title>Site-to-site interdomain communication may mediate different loss-of-function mechanisms in a cancer-associated NQO1 polymorphism.</title>
        <authorList>
            <person name="Medina-Carmona E."/>
            <person name="Neira J.L."/>
            <person name="Salido E."/>
            <person name="Fuchs J.E."/>
            <person name="Palomino-Morales R."/>
            <person name="Timson D.J."/>
            <person name="Pey A.L."/>
        </authorList>
    </citation>
    <scope>FUNCTION</scope>
    <scope>COFACTOR</scope>
    <scope>SUBUNIT</scope>
    <scope>INTERACTION WITH TP73</scope>
    <scope>REGION</scope>
    <scope>CHARACTERIZATION OF VARIANT SER-187</scope>
</reference>
<reference key="17">
    <citation type="journal article" date="1999" name="J. Med. Chem.">
        <title>Crystal structure of human DT-diaphorase: a model for interaction with the cytotoxic prodrug 5-(aziridin-1-yl)-2,4-dinitrobenzamide (CB1954).</title>
        <authorList>
            <person name="Skelly J.V."/>
            <person name="Sanderson M.R."/>
            <person name="Suter D.A."/>
            <person name="Baumann U."/>
            <person name="Read M.A."/>
            <person name="Gregory D.S.J."/>
            <person name="Bennett M."/>
            <person name="Hobbs S.M."/>
            <person name="Neidle S."/>
        </authorList>
    </citation>
    <scope>X-RAY CRYSTALLOGRAPHY (2.3 ANGSTROMS) OF 4-274 IN COMPLEX WITH FAD</scope>
    <scope>SUBUNIT</scope>
</reference>
<reference key="18">
    <citation type="journal article" date="2000" name="Proc. Natl. Acad. Sci. U.S.A.">
        <title>Structures of recombinant human and mouse NAD(P)H:quinone oxidoreductases: species comparison and structural changes with substrate binding and release.</title>
        <authorList>
            <person name="Faig M."/>
            <person name="Bianchet M.A."/>
            <person name="Talalay P."/>
            <person name="Chen S."/>
            <person name="Winski S."/>
            <person name="Ross D."/>
            <person name="Amzel L.M."/>
        </authorList>
    </citation>
    <scope>X-RAY CRYSTALLOGRAPHY (1.7 ANGSTROMS) IN COMPLEX WITH FAD AND DUROQUINONE</scope>
</reference>
<reference key="19">
    <citation type="journal article" date="2001" name="Biochemistry">
        <title>Characterization of a mechanism-based inhibitor of NAD(P)H:quinone oxidoreductase 1 by biochemical, X-ray crystallographic, and mass spectrometric approaches.</title>
        <authorList>
            <person name="Winski S.L."/>
            <person name="Faig M."/>
            <person name="Bianchet M.A."/>
            <person name="Siegel D."/>
            <person name="Swann E."/>
            <person name="Fung K."/>
            <person name="Duncan M.W."/>
            <person name="Moody C.J."/>
            <person name="Amzel L.M."/>
            <person name="Ross D."/>
        </authorList>
    </citation>
    <scope>X-RAY CRYSTALLOGRAPHY (1.8 ANGSTROMS) IN COMPLEX WITH FAD AND THE INHIBITOR ES936</scope>
    <scope>MASS SPECTROMETRY</scope>
</reference>
<reference key="20">
    <citation type="journal article" date="2001" name="Structure">
        <title>Structure-based development of anticancer drugs: complexes of NAD(P)H:quinone oxidoreductase 1 with chemotherapeutic quinones.</title>
        <authorList>
            <person name="Faig M."/>
            <person name="Bianchet M.A."/>
            <person name="Winski S."/>
            <person name="Hargreaves R."/>
            <person name="Moody C.J."/>
            <person name="Hudnott A.R."/>
            <person name="Ross D."/>
            <person name="Amzel L.M."/>
        </authorList>
    </citation>
    <scope>X-RAY CRYSTALLOGRAPHY (1.7 ANGSTROMS) IN COMPLEXES WITH FAD AND INHIBITORS</scope>
    <scope>SUBUNIT</scope>
</reference>
<reference key="21">
    <citation type="journal article" date="2006" name="Biochemistry">
        <title>The crystal structure of NAD(P)H quinone oxidoreductase 1 in complex with its potent inhibitor dicoumarol.</title>
        <authorList>
            <person name="Asher G."/>
            <person name="Dym O."/>
            <person name="Tsvetkov P."/>
            <person name="Adler J."/>
            <person name="Shaul Y."/>
        </authorList>
    </citation>
    <scope>X-RAY CRYSTALLOGRAPHY (2.75 ANGSTROMS) IN COMPLEX WITH THE INHIBITOR DICOUMAROL</scope>
</reference>
<reference key="22">
    <citation type="journal article" date="1992" name="Cancer Res.">
        <title>NAD(P)H:quinone oxidoreductase gene expression in human colon carcinoma cells: characterization of a mutation which modulates DT-diaphorase activity and mitomycin sensitivity.</title>
        <authorList>
            <person name="Traver R.D."/>
            <person name="Horikoshi T."/>
            <person name="Danenberg K.D."/>
            <person name="Stadlbauer T.H."/>
            <person name="Danenberg P.V."/>
            <person name="Ross D."/>
            <person name="Gibson N.W."/>
        </authorList>
    </citation>
    <scope>VARIANT SER-187</scope>
</reference>
<reference key="23">
    <citation type="journal article" date="1999" name="Hum. Mutat.">
        <title>No linkage of P187S polymorphism in NAD(P)H: quinone oxidoreductase (NQO1/DIA4) and type 1 diabetes in the Danish population.</title>
        <authorList>
            <person name="Kristiansen O.P."/>
            <person name="Larsen Z.M."/>
            <person name="Johannesen J."/>
            <person name="Nerup J."/>
            <person name="Mandrup-Poulsen T."/>
            <person name="Pociot F."/>
        </authorList>
    </citation>
    <scope>VARIANT SER-187</scope>
</reference>
<dbReference type="EC" id="1.6.5.2" evidence="15 16"/>
<dbReference type="EMBL" id="J03934">
    <property type="protein sequence ID" value="AAA59940.1"/>
    <property type="molecule type" value="mRNA"/>
</dbReference>
<dbReference type="EMBL" id="M81600">
    <property type="protein sequence ID" value="AAB60701.1"/>
    <property type="molecule type" value="Genomic_DNA"/>
</dbReference>
<dbReference type="EMBL" id="M81596">
    <property type="protein sequence ID" value="AAB60701.1"/>
    <property type="status" value="JOINED"/>
    <property type="molecule type" value="Genomic_DNA"/>
</dbReference>
<dbReference type="EMBL" id="M81597">
    <property type="protein sequence ID" value="AAB60701.1"/>
    <property type="status" value="JOINED"/>
    <property type="molecule type" value="Genomic_DNA"/>
</dbReference>
<dbReference type="EMBL" id="M81598">
    <property type="protein sequence ID" value="AAB60701.1"/>
    <property type="status" value="JOINED"/>
    <property type="molecule type" value="Genomic_DNA"/>
</dbReference>
<dbReference type="EMBL" id="M81599">
    <property type="protein sequence ID" value="AAB60701.1"/>
    <property type="status" value="JOINED"/>
    <property type="molecule type" value="Genomic_DNA"/>
</dbReference>
<dbReference type="EMBL" id="AY281093">
    <property type="protein sequence ID" value="AAP20940.1"/>
    <property type="status" value="ALT_SEQ"/>
    <property type="molecule type" value="Genomic_DNA"/>
</dbReference>
<dbReference type="EMBL" id="AK297979">
    <property type="protein sequence ID" value="BAG60289.1"/>
    <property type="molecule type" value="mRNA"/>
</dbReference>
<dbReference type="EMBL" id="AK312368">
    <property type="protein sequence ID" value="BAG35286.1"/>
    <property type="molecule type" value="mRNA"/>
</dbReference>
<dbReference type="EMBL" id="AK316246">
    <property type="protein sequence ID" value="BAH14617.1"/>
    <property type="molecule type" value="mRNA"/>
</dbReference>
<dbReference type="EMBL" id="AC092115">
    <property type="status" value="NOT_ANNOTATED_CDS"/>
    <property type="molecule type" value="Genomic_DNA"/>
</dbReference>
<dbReference type="EMBL" id="CH471092">
    <property type="protein sequence ID" value="EAW83283.1"/>
    <property type="molecule type" value="Genomic_DNA"/>
</dbReference>
<dbReference type="EMBL" id="CH471092">
    <property type="protein sequence ID" value="EAW83284.1"/>
    <property type="molecule type" value="Genomic_DNA"/>
</dbReference>
<dbReference type="EMBL" id="BC007659">
    <property type="protein sequence ID" value="AAH07659.1"/>
    <property type="molecule type" value="mRNA"/>
</dbReference>
<dbReference type="CCDS" id="CCDS10883.1">
    <molecule id="P15559-1"/>
</dbReference>
<dbReference type="CCDS" id="CCDS32471.1">
    <molecule id="P15559-3"/>
</dbReference>
<dbReference type="CCDS" id="CCDS32472.1">
    <molecule id="P15559-2"/>
</dbReference>
<dbReference type="PIR" id="A41135">
    <property type="entry name" value="A30879"/>
</dbReference>
<dbReference type="RefSeq" id="NP_000894.1">
    <molecule id="P15559-1"/>
    <property type="nucleotide sequence ID" value="NM_000903.3"/>
</dbReference>
<dbReference type="RefSeq" id="NP_001020604.1">
    <molecule id="P15559-2"/>
    <property type="nucleotide sequence ID" value="NM_001025433.2"/>
</dbReference>
<dbReference type="RefSeq" id="NP_001020605.1">
    <molecule id="P15559-3"/>
    <property type="nucleotide sequence ID" value="NM_001025434.2"/>
</dbReference>
<dbReference type="PDB" id="1D4A">
    <property type="method" value="X-ray"/>
    <property type="resolution" value="1.70 A"/>
    <property type="chains" value="A/B/C/D=2-274"/>
</dbReference>
<dbReference type="PDB" id="1DXO">
    <property type="method" value="X-ray"/>
    <property type="resolution" value="2.50 A"/>
    <property type="chains" value="A/B/C/D=2-274"/>
</dbReference>
<dbReference type="PDB" id="1GG5">
    <property type="method" value="X-ray"/>
    <property type="resolution" value="2.50 A"/>
    <property type="chains" value="A/B/C/D=2-274"/>
</dbReference>
<dbReference type="PDB" id="1H66">
    <property type="method" value="X-ray"/>
    <property type="resolution" value="2.00 A"/>
    <property type="chains" value="A/B/C/D=3-274"/>
</dbReference>
<dbReference type="PDB" id="1H69">
    <property type="method" value="X-ray"/>
    <property type="resolution" value="1.86 A"/>
    <property type="chains" value="A/B/C/D=3-274"/>
</dbReference>
<dbReference type="PDB" id="1KBO">
    <property type="method" value="X-ray"/>
    <property type="resolution" value="2.30 A"/>
    <property type="chains" value="A/B/C/D=2-274"/>
</dbReference>
<dbReference type="PDB" id="1KBQ">
    <property type="method" value="X-ray"/>
    <property type="resolution" value="1.80 A"/>
    <property type="chains" value="A/B/C/D=2-274"/>
</dbReference>
<dbReference type="PDB" id="1QBG">
    <property type="method" value="X-ray"/>
    <property type="resolution" value="2.30 A"/>
    <property type="chains" value="A/B/C/D=4-274"/>
</dbReference>
<dbReference type="PDB" id="2F1O">
    <property type="method" value="X-ray"/>
    <property type="resolution" value="2.75 A"/>
    <property type="chains" value="A/B/C/D/E/F/G/H=2-274"/>
</dbReference>
<dbReference type="PDB" id="3JSX">
    <property type="method" value="X-ray"/>
    <property type="resolution" value="2.45 A"/>
    <property type="chains" value="A/B/C/D/E/F/G/H=2-274"/>
</dbReference>
<dbReference type="PDB" id="4CET">
    <property type="method" value="X-ray"/>
    <property type="resolution" value="2.20 A"/>
    <property type="chains" value="A=1-274"/>
</dbReference>
<dbReference type="PDB" id="4CF6">
    <property type="method" value="X-ray"/>
    <property type="resolution" value="2.69 A"/>
    <property type="chains" value="A/B=1-274"/>
</dbReference>
<dbReference type="PDB" id="5A4K">
    <property type="method" value="X-ray"/>
    <property type="resolution" value="2.09 A"/>
    <property type="chains" value="A/B/C/D=1-274"/>
</dbReference>
<dbReference type="PDB" id="5EA2">
    <property type="method" value="X-ray"/>
    <property type="resolution" value="2.01 A"/>
    <property type="chains" value="A/C/E/G=1-273"/>
</dbReference>
<dbReference type="PDB" id="5EAI">
    <property type="method" value="X-ray"/>
    <property type="resolution" value="2.90 A"/>
    <property type="chains" value="A/B/C/D/E/F/G/H/I/J/K/L/M/N=1-274"/>
</dbReference>
<dbReference type="PDB" id="5FUQ">
    <property type="method" value="X-ray"/>
    <property type="resolution" value="2.04 A"/>
    <property type="chains" value="A/B=1-274"/>
</dbReference>
<dbReference type="PDB" id="6FY4">
    <property type="method" value="X-ray"/>
    <property type="resolution" value="2.76 A"/>
    <property type="chains" value="A/B/C/D=1-274"/>
</dbReference>
<dbReference type="PDB" id="6LLC">
    <property type="method" value="X-ray"/>
    <property type="resolution" value="2.50 A"/>
    <property type="chains" value="A/B/C/D/E/F/G/H/I/J/K/L=2-274"/>
</dbReference>
<dbReference type="PDB" id="8C9J">
    <property type="method" value="X-ray"/>
    <property type="resolution" value="2.70 A"/>
    <property type="chains" value="A/B/C/D=1-274"/>
</dbReference>
<dbReference type="PDB" id="8OK0">
    <property type="method" value="X-ray"/>
    <property type="resolution" value="1.60 A"/>
    <property type="chains" value="A/B/C/D=1-273"/>
</dbReference>
<dbReference type="PDB" id="8PQN">
    <property type="method" value="X-ray"/>
    <property type="resolution" value="3.80 A"/>
    <property type="chains" value="A/B/C/D=2-274"/>
</dbReference>
<dbReference type="PDB" id="8RFM">
    <property type="method" value="X-ray"/>
    <property type="resolution" value="2.70 A"/>
    <property type="chains" value="A/B/C/D=1-274"/>
</dbReference>
<dbReference type="PDB" id="8RFN">
    <property type="method" value="X-ray"/>
    <property type="resolution" value="2.50 A"/>
    <property type="chains" value="A/B/C/D=1-274"/>
</dbReference>
<dbReference type="PDBsum" id="1D4A"/>
<dbReference type="PDBsum" id="1DXO"/>
<dbReference type="PDBsum" id="1GG5"/>
<dbReference type="PDBsum" id="1H66"/>
<dbReference type="PDBsum" id="1H69"/>
<dbReference type="PDBsum" id="1KBO"/>
<dbReference type="PDBsum" id="1KBQ"/>
<dbReference type="PDBsum" id="1QBG"/>
<dbReference type="PDBsum" id="2F1O"/>
<dbReference type="PDBsum" id="3JSX"/>
<dbReference type="PDBsum" id="4CET"/>
<dbReference type="PDBsum" id="4CF6"/>
<dbReference type="PDBsum" id="5A4K"/>
<dbReference type="PDBsum" id="5EA2"/>
<dbReference type="PDBsum" id="5EAI"/>
<dbReference type="PDBsum" id="5FUQ"/>
<dbReference type="PDBsum" id="6FY4"/>
<dbReference type="PDBsum" id="6LLC"/>
<dbReference type="PDBsum" id="8C9J"/>
<dbReference type="PDBsum" id="8OK0"/>
<dbReference type="PDBsum" id="8PQN"/>
<dbReference type="PDBsum" id="8RFM"/>
<dbReference type="PDBsum" id="8RFN"/>
<dbReference type="SMR" id="P15559"/>
<dbReference type="BioGRID" id="108072">
    <property type="interactions" value="102"/>
</dbReference>
<dbReference type="DIP" id="DIP-24210N"/>
<dbReference type="FunCoup" id="P15559">
    <property type="interactions" value="637"/>
</dbReference>
<dbReference type="IntAct" id="P15559">
    <property type="interactions" value="17"/>
</dbReference>
<dbReference type="MINT" id="P15559"/>
<dbReference type="STRING" id="9606.ENSP00000319788"/>
<dbReference type="BindingDB" id="P15559"/>
<dbReference type="ChEMBL" id="CHEMBL3623"/>
<dbReference type="DrugBank" id="DB07385">
    <property type="generic name" value="3-(HYDROXYMETHYL)-1-METHYL-5-(2-METHYLAZIRIDIN-1-YL)-2-PHENYL-1H-INDOLE-4,7-DIONE"/>
</dbReference>
<dbReference type="DrugBank" id="DB02395">
    <property type="generic name" value="3-Hydroxymethyl-5-Aziridinyl-1methyl-2-[1h-Indole-4,7-Dione]-Propanol"/>
</dbReference>
<dbReference type="DrugBank" id="DB03626">
    <property type="generic name" value="5-Methoxy-1,2-Dimethyl-3-(Phenoxymethyl)Indole-4,7-Dione"/>
</dbReference>
<dbReference type="DrugBank" id="DB14001">
    <property type="generic name" value="alpha-Tocopherol succinate"/>
</dbReference>
<dbReference type="DrugBank" id="DB04392">
    <property type="generic name" value="Bishydroxy[2h-1-Benzopyran-2-One,1,2-Benzopyrone]"/>
</dbReference>
<dbReference type="DrugBank" id="DB09061">
    <property type="generic name" value="Cannabidiol"/>
</dbReference>
<dbReference type="DrugBank" id="DB00958">
    <property type="generic name" value="Carboplatin"/>
</dbReference>
<dbReference type="DrugBank" id="DB02633">
    <property type="generic name" value="Cibacron Blue"/>
</dbReference>
<dbReference type="DrugBank" id="DB00515">
    <property type="generic name" value="Cisplatin"/>
</dbReference>
<dbReference type="DrugBank" id="DB14002">
    <property type="generic name" value="D-alpha-Tocopherol acetate"/>
</dbReference>
<dbReference type="DrugBank" id="DB00266">
    <property type="generic name" value="Dicoumarol"/>
</dbReference>
<dbReference type="DrugBank" id="DB00997">
    <property type="generic name" value="Doxorubicin"/>
</dbReference>
<dbReference type="DrugBank" id="DB01927">
    <property type="generic name" value="Duroquinone"/>
</dbReference>
<dbReference type="DrugBank" id="DB02400">
    <property type="generic name" value="ES-936"/>
</dbReference>
<dbReference type="DrugBank" id="DB03147">
    <property type="generic name" value="Flavin adenine dinucleotide"/>
</dbReference>
<dbReference type="DrugBank" id="DB00170">
    <property type="generic name" value="Menadione"/>
</dbReference>
<dbReference type="DrugBank" id="DB00526">
    <property type="generic name" value="Oxaliplatin"/>
</dbReference>
<dbReference type="DrugBank" id="DB00252">
    <property type="generic name" value="Phenytoin"/>
</dbReference>
<dbReference type="DrugBank" id="DB04090">
    <property type="generic name" value="RH-1"/>
</dbReference>
<dbReference type="DrugBank" id="DB00163">
    <property type="generic name" value="Vitamin E"/>
</dbReference>
<dbReference type="DrugCentral" id="P15559"/>
<dbReference type="GlyGen" id="P15559">
    <property type="glycosylation" value="1 site, 1 O-linked glycan (1 site)"/>
</dbReference>
<dbReference type="iPTMnet" id="P15559"/>
<dbReference type="MetOSite" id="P15559"/>
<dbReference type="PhosphoSitePlus" id="P15559"/>
<dbReference type="SwissPalm" id="P15559"/>
<dbReference type="BioMuta" id="NQO1"/>
<dbReference type="DMDM" id="118607"/>
<dbReference type="jPOST" id="P15559"/>
<dbReference type="MassIVE" id="P15559"/>
<dbReference type="PaxDb" id="9606-ENSP00000319788"/>
<dbReference type="PeptideAtlas" id="P15559"/>
<dbReference type="ProteomicsDB" id="53187">
    <molecule id="P15559-1"/>
</dbReference>
<dbReference type="ProteomicsDB" id="53188">
    <molecule id="P15559-2"/>
</dbReference>
<dbReference type="Pumba" id="P15559"/>
<dbReference type="TopDownProteomics" id="P15559-1">
    <molecule id="P15559-1"/>
</dbReference>
<dbReference type="Antibodypedia" id="1549">
    <property type="antibodies" value="821 antibodies from 42 providers"/>
</dbReference>
<dbReference type="DNASU" id="1728"/>
<dbReference type="Ensembl" id="ENST00000320623.10">
    <molecule id="P15559-1"/>
    <property type="protein sequence ID" value="ENSP00000319788.5"/>
    <property type="gene ID" value="ENSG00000181019.13"/>
</dbReference>
<dbReference type="Ensembl" id="ENST00000379046.6">
    <molecule id="P15559-3"/>
    <property type="protein sequence ID" value="ENSP00000368334.2"/>
    <property type="gene ID" value="ENSG00000181019.13"/>
</dbReference>
<dbReference type="Ensembl" id="ENST00000379047.7">
    <molecule id="P15559-2"/>
    <property type="protein sequence ID" value="ENSP00000368335.3"/>
    <property type="gene ID" value="ENSG00000181019.13"/>
</dbReference>
<dbReference type="GeneID" id="1728"/>
<dbReference type="KEGG" id="hsa:1728"/>
<dbReference type="MANE-Select" id="ENST00000320623.10">
    <property type="protein sequence ID" value="ENSP00000319788.5"/>
    <property type="RefSeq nucleotide sequence ID" value="NM_000903.3"/>
    <property type="RefSeq protein sequence ID" value="NP_000894.1"/>
</dbReference>
<dbReference type="UCSC" id="uc002exp.5">
    <molecule id="P15559-1"/>
    <property type="organism name" value="human"/>
</dbReference>
<dbReference type="AGR" id="HGNC:2874"/>
<dbReference type="CTD" id="1728"/>
<dbReference type="DisGeNET" id="1728"/>
<dbReference type="GeneCards" id="NQO1"/>
<dbReference type="HGNC" id="HGNC:2874">
    <property type="gene designation" value="NQO1"/>
</dbReference>
<dbReference type="HPA" id="ENSG00000181019">
    <property type="expression patterns" value="Tissue enhanced (stomach)"/>
</dbReference>
<dbReference type="MIM" id="125860">
    <property type="type" value="gene"/>
</dbReference>
<dbReference type="neXtProt" id="NX_P15559"/>
<dbReference type="OpenTargets" id="ENSG00000181019"/>
<dbReference type="PharmGKB" id="PA31744"/>
<dbReference type="VEuPathDB" id="HostDB:ENSG00000181019"/>
<dbReference type="eggNOG" id="ENOG502QQMI">
    <property type="taxonomic scope" value="Eukaryota"/>
</dbReference>
<dbReference type="GeneTree" id="ENSGT00940000159150"/>
<dbReference type="InParanoid" id="P15559"/>
<dbReference type="OMA" id="HGILHYP"/>
<dbReference type="OrthoDB" id="26889at2759"/>
<dbReference type="PAN-GO" id="P15559">
    <property type="GO annotations" value="2 GO annotations based on evolutionary models"/>
</dbReference>
<dbReference type="PhylomeDB" id="P15559"/>
<dbReference type="TreeFam" id="TF300296"/>
<dbReference type="BioCyc" id="MetaCyc:HS11566-MONOMER"/>
<dbReference type="BRENDA" id="1.6.5.2">
    <property type="organism ID" value="2681"/>
</dbReference>
<dbReference type="PathwayCommons" id="P15559"/>
<dbReference type="Reactome" id="R-HSA-350562">
    <property type="pathway name" value="Regulation of ornithine decarboxylase (ODC)"/>
</dbReference>
<dbReference type="Reactome" id="R-HSA-9818027">
    <property type="pathway name" value="NFE2L2 regulating anti-oxidant/detoxification enzymes"/>
</dbReference>
<dbReference type="SABIO-RK" id="P15559"/>
<dbReference type="SignaLink" id="P15559"/>
<dbReference type="SIGNOR" id="P15559"/>
<dbReference type="BioGRID-ORCS" id="1728">
    <property type="hits" value="20 hits in 1161 CRISPR screens"/>
</dbReference>
<dbReference type="ChiTaRS" id="NQO1">
    <property type="organism name" value="human"/>
</dbReference>
<dbReference type="EvolutionaryTrace" id="P15559"/>
<dbReference type="GeneWiki" id="NAD(P)H_dehydrogenase_(quinone_1)"/>
<dbReference type="GenomeRNAi" id="1728"/>
<dbReference type="Pharos" id="P15559">
    <property type="development level" value="Tchem"/>
</dbReference>
<dbReference type="PRO" id="PR:P15559"/>
<dbReference type="Proteomes" id="UP000005640">
    <property type="component" value="Chromosome 16"/>
</dbReference>
<dbReference type="RNAct" id="P15559">
    <property type="molecule type" value="protein"/>
</dbReference>
<dbReference type="Bgee" id="ENSG00000181019">
    <property type="expression patterns" value="Expressed in endometrium epithelium and 202 other cell types or tissues"/>
</dbReference>
<dbReference type="ExpressionAtlas" id="P15559">
    <property type="expression patterns" value="baseline and differential"/>
</dbReference>
<dbReference type="GO" id="GO:0005737">
    <property type="term" value="C:cytoplasm"/>
    <property type="evidence" value="ECO:0000304"/>
    <property type="project" value="ProtInc"/>
</dbReference>
<dbReference type="GO" id="GO:0005829">
    <property type="term" value="C:cytosol"/>
    <property type="evidence" value="ECO:0000314"/>
    <property type="project" value="CAFA"/>
</dbReference>
<dbReference type="GO" id="GO:0005634">
    <property type="term" value="C:nucleus"/>
    <property type="evidence" value="ECO:0007669"/>
    <property type="project" value="Ensembl"/>
</dbReference>
<dbReference type="GO" id="GO:0045202">
    <property type="term" value="C:synapse"/>
    <property type="evidence" value="ECO:0007669"/>
    <property type="project" value="GOC"/>
</dbReference>
<dbReference type="GO" id="GO:0004128">
    <property type="term" value="F:cytochrome-b5 reductase activity, acting on NAD(P)H"/>
    <property type="evidence" value="ECO:0000304"/>
    <property type="project" value="ProtInc"/>
</dbReference>
<dbReference type="GO" id="GO:0042802">
    <property type="term" value="F:identical protein binding"/>
    <property type="evidence" value="ECO:0000353"/>
    <property type="project" value="IntAct"/>
</dbReference>
<dbReference type="GO" id="GO:0003955">
    <property type="term" value="F:NAD(P)H dehydrogenase (quinone) activity"/>
    <property type="evidence" value="ECO:0000318"/>
    <property type="project" value="GO_Central"/>
</dbReference>
<dbReference type="GO" id="GO:0050136">
    <property type="term" value="F:NADH:ubiquinone reductase (non-electrogenic) activity"/>
    <property type="evidence" value="ECO:0000314"/>
    <property type="project" value="UniProtKB"/>
</dbReference>
<dbReference type="GO" id="GO:0008753">
    <property type="term" value="F:NADPH dehydrogenase (quinone) activity"/>
    <property type="evidence" value="ECO:0007669"/>
    <property type="project" value="RHEA"/>
</dbReference>
<dbReference type="GO" id="GO:0003723">
    <property type="term" value="F:RNA binding"/>
    <property type="evidence" value="ECO:0007005"/>
    <property type="project" value="UniProtKB"/>
</dbReference>
<dbReference type="GO" id="GO:0045454">
    <property type="term" value="P:cell redox homeostasis"/>
    <property type="evidence" value="ECO:0000270"/>
    <property type="project" value="UniProtKB"/>
</dbReference>
<dbReference type="GO" id="GO:0034599">
    <property type="term" value="P:cellular response to oxidative stress"/>
    <property type="evidence" value="ECO:0000314"/>
    <property type="project" value="UniProtKB"/>
</dbReference>
<dbReference type="GO" id="GO:0045087">
    <property type="term" value="P:innate immune response"/>
    <property type="evidence" value="ECO:0007669"/>
    <property type="project" value="Ensembl"/>
</dbReference>
<dbReference type="GO" id="GO:0110076">
    <property type="term" value="P:negative regulation of ferroptosis"/>
    <property type="evidence" value="ECO:0000315"/>
    <property type="project" value="UniProtKB"/>
</dbReference>
<dbReference type="GO" id="GO:0042177">
    <property type="term" value="P:negative regulation of protein catabolic process"/>
    <property type="evidence" value="ECO:0000314"/>
    <property type="project" value="UniProtKB"/>
</dbReference>
<dbReference type="GO" id="GO:0006809">
    <property type="term" value="P:nitric oxide biosynthetic process"/>
    <property type="evidence" value="ECO:0000304"/>
    <property type="project" value="ProtInc"/>
</dbReference>
<dbReference type="GO" id="GO:0030163">
    <property type="term" value="P:protein catabolic process"/>
    <property type="evidence" value="ECO:0007669"/>
    <property type="project" value="Ensembl"/>
</dbReference>
<dbReference type="GO" id="GO:0000209">
    <property type="term" value="P:protein polyubiquitination"/>
    <property type="evidence" value="ECO:0007669"/>
    <property type="project" value="Ensembl"/>
</dbReference>
<dbReference type="GO" id="GO:0019430">
    <property type="term" value="P:removal of superoxide radicals"/>
    <property type="evidence" value="ECO:0000314"/>
    <property type="project" value="UniProtKB"/>
</dbReference>
<dbReference type="GO" id="GO:0032496">
    <property type="term" value="P:response to lipopolysaccharide"/>
    <property type="evidence" value="ECO:0007669"/>
    <property type="project" value="Ensembl"/>
</dbReference>
<dbReference type="GO" id="GO:0006979">
    <property type="term" value="P:response to oxidative stress"/>
    <property type="evidence" value="ECO:0000270"/>
    <property type="project" value="UniProtKB"/>
</dbReference>
<dbReference type="GO" id="GO:0009636">
    <property type="term" value="P:response to toxic substance"/>
    <property type="evidence" value="ECO:0000304"/>
    <property type="project" value="ProtInc"/>
</dbReference>
<dbReference type="GO" id="GO:0007271">
    <property type="term" value="P:synaptic transmission, cholinergic"/>
    <property type="evidence" value="ECO:0000304"/>
    <property type="project" value="ProtInc"/>
</dbReference>
<dbReference type="GO" id="GO:0006743">
    <property type="term" value="P:ubiquinone metabolic process"/>
    <property type="evidence" value="ECO:0000314"/>
    <property type="project" value="UniProtKB"/>
</dbReference>
<dbReference type="GO" id="GO:0042360">
    <property type="term" value="P:vitamin E metabolic process"/>
    <property type="evidence" value="ECO:0000314"/>
    <property type="project" value="UniProtKB"/>
</dbReference>
<dbReference type="GO" id="GO:0042373">
    <property type="term" value="P:vitamin K metabolic process"/>
    <property type="evidence" value="ECO:0000314"/>
    <property type="project" value="UniProtKB"/>
</dbReference>
<dbReference type="GO" id="GO:0006805">
    <property type="term" value="P:xenobiotic metabolic process"/>
    <property type="evidence" value="ECO:0000304"/>
    <property type="project" value="ProtInc"/>
</dbReference>
<dbReference type="FunFam" id="3.40.50.360:FF:000029">
    <property type="entry name" value="NAD(P)H dehydrogenase [quinone] 1"/>
    <property type="match status" value="1"/>
</dbReference>
<dbReference type="Gene3D" id="3.40.50.360">
    <property type="match status" value="1"/>
</dbReference>
<dbReference type="InterPro" id="IPR003680">
    <property type="entry name" value="Flavodoxin_fold"/>
</dbReference>
<dbReference type="InterPro" id="IPR029039">
    <property type="entry name" value="Flavoprotein-like_sf"/>
</dbReference>
<dbReference type="InterPro" id="IPR051545">
    <property type="entry name" value="NAD(P)H_dehydrogenase_qn"/>
</dbReference>
<dbReference type="PANTHER" id="PTHR10204">
    <property type="entry name" value="NAD P H OXIDOREDUCTASE-RELATED"/>
    <property type="match status" value="1"/>
</dbReference>
<dbReference type="PANTHER" id="PTHR10204:SF1">
    <property type="entry name" value="NAD(P)H DEHYDROGENASE [QUINONE] 1"/>
    <property type="match status" value="1"/>
</dbReference>
<dbReference type="Pfam" id="PF02525">
    <property type="entry name" value="Flavodoxin_2"/>
    <property type="match status" value="1"/>
</dbReference>
<dbReference type="SUPFAM" id="SSF52218">
    <property type="entry name" value="Flavoproteins"/>
    <property type="match status" value="1"/>
</dbReference>
<gene>
    <name evidence="19 24" type="primary">NQO1</name>
    <name type="synonym">DIA4</name>
    <name type="synonym">NMOR1</name>
</gene>
<comment type="function">
    <text evidence="1 8 9 14 15 16">Flavin-containing quinone reductase that catalyzes two-electron reduction of quinones to hydroquinones using either NADH or NADPH as electron donors. In a ping-pong kinetic mechanism, the electrons are sequentially transferred from NAD(P)H to flavin cofactor and then from reduced flavin to the quinone, bypassing the formation of semiquinone and reactive oxygen species (By similarity) (PubMed:8999809, PubMed:9271353). Regulates cellular redox state primarily through quinone detoxification. Reduces components of plasma membrane redox system such as coenzyme Q and vitamin quinones, producing antioxidant hydroquinone forms. In the process may function as superoxide scavenger to prevent hydroquinone oxidation and facilitate excretion (PubMed:15102952, PubMed:8999809, PubMed:9271353). Alternatively, can activate quinones and their derivatives by generating redox reactive hydroquinones with DNA cross-linking antitumor potential (PubMed:8999809). Acts as a gatekeeper of the core 20S proteasome known to degrade proteins with unstructured regions. Upon oxidative stress, interacts with tumor suppressors TP53 and TP73 in a NADH-dependent way and inhibits their ubiquitin-independent degradation by the 20S proteasome (PubMed:15687255, PubMed:28291250).</text>
</comment>
<comment type="catalytic activity">
    <reaction evidence="15 16">
        <text>a quinone + NADH + H(+) = a quinol + NAD(+)</text>
        <dbReference type="Rhea" id="RHEA:46160"/>
        <dbReference type="ChEBI" id="CHEBI:15378"/>
        <dbReference type="ChEBI" id="CHEBI:24646"/>
        <dbReference type="ChEBI" id="CHEBI:57540"/>
        <dbReference type="ChEBI" id="CHEBI:57945"/>
        <dbReference type="ChEBI" id="CHEBI:132124"/>
        <dbReference type="EC" id="1.6.5.2"/>
    </reaction>
    <physiologicalReaction direction="left-to-right" evidence="22 23">
        <dbReference type="Rhea" id="RHEA:46161"/>
    </physiologicalReaction>
</comment>
<comment type="catalytic activity">
    <reaction evidence="16">
        <text>a quinone + NADPH + H(+) = a quinol + NADP(+)</text>
        <dbReference type="Rhea" id="RHEA:46164"/>
        <dbReference type="ChEBI" id="CHEBI:15378"/>
        <dbReference type="ChEBI" id="CHEBI:24646"/>
        <dbReference type="ChEBI" id="CHEBI:57783"/>
        <dbReference type="ChEBI" id="CHEBI:58349"/>
        <dbReference type="ChEBI" id="CHEBI:132124"/>
        <dbReference type="EC" id="1.6.5.2"/>
    </reaction>
    <physiologicalReaction direction="left-to-right" evidence="23">
        <dbReference type="Rhea" id="RHEA:46165"/>
    </physiologicalReaction>
</comment>
<comment type="catalytic activity">
    <reaction evidence="16">
        <text>ubiquinone-10 + NADH + H(+) = ubiquinol-10 + NAD(+)</text>
        <dbReference type="Rhea" id="RHEA:61984"/>
        <dbReference type="ChEBI" id="CHEBI:15378"/>
        <dbReference type="ChEBI" id="CHEBI:46245"/>
        <dbReference type="ChEBI" id="CHEBI:57540"/>
        <dbReference type="ChEBI" id="CHEBI:57945"/>
        <dbReference type="ChEBI" id="CHEBI:64183"/>
    </reaction>
    <physiologicalReaction direction="left-to-right" evidence="23">
        <dbReference type="Rhea" id="RHEA:61985"/>
    </physiologicalReaction>
</comment>
<comment type="catalytic activity">
    <reaction evidence="15">
        <text>menadione + NADH + H(+) = menadiol + NAD(+)</text>
        <dbReference type="Rhea" id="RHEA:69695"/>
        <dbReference type="ChEBI" id="CHEBI:6746"/>
        <dbReference type="ChEBI" id="CHEBI:15378"/>
        <dbReference type="ChEBI" id="CHEBI:28869"/>
        <dbReference type="ChEBI" id="CHEBI:57540"/>
        <dbReference type="ChEBI" id="CHEBI:57945"/>
    </reaction>
    <physiologicalReaction direction="left-to-right" evidence="22">
        <dbReference type="Rhea" id="RHEA:69696"/>
    </physiologicalReaction>
</comment>
<comment type="cofactor">
    <cofactor evidence="14">
        <name>FAD</name>
        <dbReference type="ChEBI" id="CHEBI:57692"/>
    </cofactor>
</comment>
<comment type="activity regulation">
    <text evidence="9 16">Inhibited by dicoumarol.</text>
</comment>
<comment type="biophysicochemical properties">
    <kinetics>
        <KM evidence="15">2.7 uM for menadione</KM>
        <KM evidence="15">220 uM for NADH</KM>
        <KM evidence="15">1370 uM for 5-(aziridin-1-yl)-2,4-dinitrobenzamide</KM>
        <Vmax evidence="15">1100.0 umol/min/mg enzyme toward menadione</Vmax>
        <Vmax evidence="15">20.0 nmol/min/mg enzyme toward 5-(aziridin-1-yl)-2,4-dinitrobenzamide</Vmax>
    </kinetics>
</comment>
<comment type="subunit">
    <text evidence="3 4 5 6 9 11 13 14">Homodimer (PubMed:10543876, PubMed:10706635, PubMed:11587640, PubMed:11735396, PubMed:16700548, PubMed:28291250). Interacts with PDLIM4 isoform 2; this interaction stabilizes PDLIM4 isoform 2 in response to oxidative stress and protects it from ubiquitin-independent degradation by the core 20S proteasome (PubMed:21636573). Interacts with TP73 (via SAM domain); this interaction is NADH-dependent, stabilizes TP73 in response to oxidative stress and protects it from ubiquitin-independent degradation by the 20S proteasome (PubMed:15687255, PubMed:28291250). Interacts with TP53; this interaction is NADH-dependent, stabilizes TP53 in response to oxidative stress and protects it from ubiquitin-independent degradation by the 20S proteasome (PubMed:15687255).</text>
</comment>
<comment type="interaction">
    <interactant intactId="EBI-3989435">
        <id>P15559</id>
    </interactant>
    <interactant intactId="EBI-750827">
        <id>P07902</id>
        <label>GALT</label>
    </interactant>
    <organismsDiffer>false</organismsDiffer>
    <experiments>3</experiments>
</comment>
<comment type="interaction">
    <interactant intactId="EBI-3989435">
        <id>P15559</id>
    </interactant>
    <interactant intactId="EBI-399198">
        <id>Q9UK53</id>
        <label>ING1</label>
    </interactant>
    <organismsDiffer>false</organismsDiffer>
    <experiments>2</experiments>
</comment>
<comment type="interaction">
    <interactant intactId="EBI-3989435">
        <id>P15559</id>
    </interactant>
    <interactant intactId="EBI-3989435">
        <id>P15559</id>
        <label>NQO1</label>
    </interactant>
    <organismsDiffer>false</organismsDiffer>
    <experiments>5</experiments>
</comment>
<comment type="subcellular location">
    <subcellularLocation>
        <location evidence="1">Cytoplasm</location>
        <location evidence="1">Cytosol</location>
    </subcellularLocation>
</comment>
<comment type="alternative products">
    <event type="alternative splicing"/>
    <isoform>
        <id>P15559-1</id>
        <name>1</name>
        <sequence type="displayed"/>
    </isoform>
    <isoform>
        <id>P15559-2</id>
        <name>2</name>
        <sequence type="described" ref="VSP_042716"/>
    </isoform>
    <isoform>
        <id>P15559-3</id>
        <name>3</name>
        <sequence type="described" ref="VSP_044446"/>
    </isoform>
</comment>
<comment type="induction">
    <text evidence="10 13">By dioxin (PubMed:1657151). By oxidative stress (PubMed:21636573).</text>
</comment>
<comment type="mass spectrometry" mass="30864.0" error="6.0" method="Electrospray" evidence="6"/>
<comment type="polymorphism">
    <text>The Ser-187 polymorphism may be linked to susceptibility to forms of cancers.</text>
</comment>
<comment type="miscellaneous">
    <text>Quinone reductase accepts electrons from both NADH and NADPH with equal efficiency.</text>
</comment>
<comment type="similarity">
    <text evidence="21">Belongs to the NAD(P)H dehydrogenase (quinone) family.</text>
</comment>
<comment type="online information" name="Atlas of Genetics and Cytogenetics in Oncology and Haematology">
    <link uri="https://atlasgeneticsoncology.org/gene/375/NQO1"/>
</comment>
<proteinExistence type="evidence at protein level"/>